<accession>A5ED09</accession>
<feature type="chain" id="PRO_1000000784" description="Adenylosuccinate synthetase">
    <location>
        <begin position="1"/>
        <end position="430"/>
    </location>
</feature>
<feature type="region of interest" description="Disordered" evidence="2">
    <location>
        <begin position="277"/>
        <end position="298"/>
    </location>
</feature>
<feature type="compositionally biased region" description="Basic and acidic residues" evidence="2">
    <location>
        <begin position="285"/>
        <end position="296"/>
    </location>
</feature>
<feature type="active site" description="Proton acceptor" evidence="1">
    <location>
        <position position="13"/>
    </location>
</feature>
<feature type="active site" description="Proton donor" evidence="1">
    <location>
        <position position="41"/>
    </location>
</feature>
<feature type="binding site" evidence="1">
    <location>
        <begin position="12"/>
        <end position="18"/>
    </location>
    <ligand>
        <name>GTP</name>
        <dbReference type="ChEBI" id="CHEBI:37565"/>
    </ligand>
</feature>
<feature type="binding site" description="in other chain" evidence="1">
    <location>
        <begin position="13"/>
        <end position="16"/>
    </location>
    <ligand>
        <name>IMP</name>
        <dbReference type="ChEBI" id="CHEBI:58053"/>
        <note>ligand shared between dimeric partners</note>
    </ligand>
</feature>
<feature type="binding site" evidence="1">
    <location>
        <position position="13"/>
    </location>
    <ligand>
        <name>Mg(2+)</name>
        <dbReference type="ChEBI" id="CHEBI:18420"/>
    </ligand>
</feature>
<feature type="binding site" description="in other chain" evidence="1">
    <location>
        <begin position="38"/>
        <end position="41"/>
    </location>
    <ligand>
        <name>IMP</name>
        <dbReference type="ChEBI" id="CHEBI:58053"/>
        <note>ligand shared between dimeric partners</note>
    </ligand>
</feature>
<feature type="binding site" evidence="1">
    <location>
        <begin position="40"/>
        <end position="42"/>
    </location>
    <ligand>
        <name>GTP</name>
        <dbReference type="ChEBI" id="CHEBI:37565"/>
    </ligand>
</feature>
<feature type="binding site" evidence="1">
    <location>
        <position position="40"/>
    </location>
    <ligand>
        <name>Mg(2+)</name>
        <dbReference type="ChEBI" id="CHEBI:18420"/>
    </ligand>
</feature>
<feature type="binding site" description="in other chain" evidence="1">
    <location>
        <position position="130"/>
    </location>
    <ligand>
        <name>IMP</name>
        <dbReference type="ChEBI" id="CHEBI:58053"/>
        <note>ligand shared between dimeric partners</note>
    </ligand>
</feature>
<feature type="binding site" evidence="1">
    <location>
        <position position="144"/>
    </location>
    <ligand>
        <name>IMP</name>
        <dbReference type="ChEBI" id="CHEBI:58053"/>
        <note>ligand shared between dimeric partners</note>
    </ligand>
</feature>
<feature type="binding site" description="in other chain" evidence="1">
    <location>
        <position position="224"/>
    </location>
    <ligand>
        <name>IMP</name>
        <dbReference type="ChEBI" id="CHEBI:58053"/>
        <note>ligand shared between dimeric partners</note>
    </ligand>
</feature>
<feature type="binding site" description="in other chain" evidence="1">
    <location>
        <position position="239"/>
    </location>
    <ligand>
        <name>IMP</name>
        <dbReference type="ChEBI" id="CHEBI:58053"/>
        <note>ligand shared between dimeric partners</note>
    </ligand>
</feature>
<feature type="binding site" evidence="1">
    <location>
        <begin position="299"/>
        <end position="305"/>
    </location>
    <ligand>
        <name>substrate</name>
    </ligand>
</feature>
<feature type="binding site" description="in other chain" evidence="1">
    <location>
        <position position="303"/>
    </location>
    <ligand>
        <name>IMP</name>
        <dbReference type="ChEBI" id="CHEBI:58053"/>
        <note>ligand shared between dimeric partners</note>
    </ligand>
</feature>
<feature type="binding site" evidence="1">
    <location>
        <position position="305"/>
    </location>
    <ligand>
        <name>GTP</name>
        <dbReference type="ChEBI" id="CHEBI:37565"/>
    </ligand>
</feature>
<feature type="binding site" evidence="1">
    <location>
        <begin position="331"/>
        <end position="333"/>
    </location>
    <ligand>
        <name>GTP</name>
        <dbReference type="ChEBI" id="CHEBI:37565"/>
    </ligand>
</feature>
<feature type="binding site" evidence="1">
    <location>
        <begin position="413"/>
        <end position="415"/>
    </location>
    <ligand>
        <name>GTP</name>
        <dbReference type="ChEBI" id="CHEBI:37565"/>
    </ligand>
</feature>
<dbReference type="EC" id="6.3.4.4" evidence="1"/>
<dbReference type="EMBL" id="CP000494">
    <property type="protein sequence ID" value="ABQ34053.1"/>
    <property type="molecule type" value="Genomic_DNA"/>
</dbReference>
<dbReference type="RefSeq" id="WP_012042083.1">
    <property type="nucleotide sequence ID" value="NC_009485.1"/>
</dbReference>
<dbReference type="SMR" id="A5ED09"/>
<dbReference type="STRING" id="288000.BBta_1850"/>
<dbReference type="KEGG" id="bbt:BBta_1850"/>
<dbReference type="eggNOG" id="COG0104">
    <property type="taxonomic scope" value="Bacteria"/>
</dbReference>
<dbReference type="HOGENOM" id="CLU_029848_0_0_5"/>
<dbReference type="OrthoDB" id="9807553at2"/>
<dbReference type="UniPathway" id="UPA00075">
    <property type="reaction ID" value="UER00335"/>
</dbReference>
<dbReference type="Proteomes" id="UP000000246">
    <property type="component" value="Chromosome"/>
</dbReference>
<dbReference type="GO" id="GO:0005737">
    <property type="term" value="C:cytoplasm"/>
    <property type="evidence" value="ECO:0007669"/>
    <property type="project" value="UniProtKB-SubCell"/>
</dbReference>
<dbReference type="GO" id="GO:0004019">
    <property type="term" value="F:adenylosuccinate synthase activity"/>
    <property type="evidence" value="ECO:0007669"/>
    <property type="project" value="UniProtKB-UniRule"/>
</dbReference>
<dbReference type="GO" id="GO:0005525">
    <property type="term" value="F:GTP binding"/>
    <property type="evidence" value="ECO:0007669"/>
    <property type="project" value="UniProtKB-UniRule"/>
</dbReference>
<dbReference type="GO" id="GO:0000287">
    <property type="term" value="F:magnesium ion binding"/>
    <property type="evidence" value="ECO:0007669"/>
    <property type="project" value="UniProtKB-UniRule"/>
</dbReference>
<dbReference type="GO" id="GO:0044208">
    <property type="term" value="P:'de novo' AMP biosynthetic process"/>
    <property type="evidence" value="ECO:0007669"/>
    <property type="project" value="UniProtKB-UniRule"/>
</dbReference>
<dbReference type="GO" id="GO:0046040">
    <property type="term" value="P:IMP metabolic process"/>
    <property type="evidence" value="ECO:0007669"/>
    <property type="project" value="TreeGrafter"/>
</dbReference>
<dbReference type="CDD" id="cd03108">
    <property type="entry name" value="AdSS"/>
    <property type="match status" value="1"/>
</dbReference>
<dbReference type="FunFam" id="1.10.300.10:FF:000001">
    <property type="entry name" value="Adenylosuccinate synthetase"/>
    <property type="match status" value="1"/>
</dbReference>
<dbReference type="FunFam" id="3.90.170.10:FF:000001">
    <property type="entry name" value="Adenylosuccinate synthetase"/>
    <property type="match status" value="1"/>
</dbReference>
<dbReference type="Gene3D" id="3.40.440.10">
    <property type="entry name" value="Adenylosuccinate Synthetase, subunit A, domain 1"/>
    <property type="match status" value="1"/>
</dbReference>
<dbReference type="Gene3D" id="1.10.300.10">
    <property type="entry name" value="Adenylosuccinate Synthetase, subunit A, domain 2"/>
    <property type="match status" value="1"/>
</dbReference>
<dbReference type="Gene3D" id="3.90.170.10">
    <property type="entry name" value="Adenylosuccinate Synthetase, subunit A, domain 3"/>
    <property type="match status" value="1"/>
</dbReference>
<dbReference type="HAMAP" id="MF_00011">
    <property type="entry name" value="Adenylosucc_synth"/>
    <property type="match status" value="1"/>
</dbReference>
<dbReference type="InterPro" id="IPR018220">
    <property type="entry name" value="Adenylosuccin_syn_GTP-bd"/>
</dbReference>
<dbReference type="InterPro" id="IPR033128">
    <property type="entry name" value="Adenylosuccin_syn_Lys_AS"/>
</dbReference>
<dbReference type="InterPro" id="IPR042109">
    <property type="entry name" value="Adenylosuccinate_synth_dom1"/>
</dbReference>
<dbReference type="InterPro" id="IPR042110">
    <property type="entry name" value="Adenylosuccinate_synth_dom2"/>
</dbReference>
<dbReference type="InterPro" id="IPR042111">
    <property type="entry name" value="Adenylosuccinate_synth_dom3"/>
</dbReference>
<dbReference type="InterPro" id="IPR001114">
    <property type="entry name" value="Adenylosuccinate_synthetase"/>
</dbReference>
<dbReference type="InterPro" id="IPR027417">
    <property type="entry name" value="P-loop_NTPase"/>
</dbReference>
<dbReference type="NCBIfam" id="NF002223">
    <property type="entry name" value="PRK01117.1"/>
    <property type="match status" value="1"/>
</dbReference>
<dbReference type="NCBIfam" id="TIGR00184">
    <property type="entry name" value="purA"/>
    <property type="match status" value="1"/>
</dbReference>
<dbReference type="PANTHER" id="PTHR11846">
    <property type="entry name" value="ADENYLOSUCCINATE SYNTHETASE"/>
    <property type="match status" value="1"/>
</dbReference>
<dbReference type="PANTHER" id="PTHR11846:SF0">
    <property type="entry name" value="ADENYLOSUCCINATE SYNTHETASE"/>
    <property type="match status" value="1"/>
</dbReference>
<dbReference type="Pfam" id="PF00709">
    <property type="entry name" value="Adenylsucc_synt"/>
    <property type="match status" value="1"/>
</dbReference>
<dbReference type="SMART" id="SM00788">
    <property type="entry name" value="Adenylsucc_synt"/>
    <property type="match status" value="1"/>
</dbReference>
<dbReference type="SUPFAM" id="SSF52540">
    <property type="entry name" value="P-loop containing nucleoside triphosphate hydrolases"/>
    <property type="match status" value="1"/>
</dbReference>
<dbReference type="PROSITE" id="PS01266">
    <property type="entry name" value="ADENYLOSUCCIN_SYN_1"/>
    <property type="match status" value="1"/>
</dbReference>
<dbReference type="PROSITE" id="PS00513">
    <property type="entry name" value="ADENYLOSUCCIN_SYN_2"/>
    <property type="match status" value="1"/>
</dbReference>
<proteinExistence type="inferred from homology"/>
<keyword id="KW-0963">Cytoplasm</keyword>
<keyword id="KW-0342">GTP-binding</keyword>
<keyword id="KW-0436">Ligase</keyword>
<keyword id="KW-0460">Magnesium</keyword>
<keyword id="KW-0479">Metal-binding</keyword>
<keyword id="KW-0547">Nucleotide-binding</keyword>
<keyword id="KW-0658">Purine biosynthesis</keyword>
<keyword id="KW-1185">Reference proteome</keyword>
<protein>
    <recommendedName>
        <fullName evidence="1">Adenylosuccinate synthetase</fullName>
        <shortName evidence="1">AMPSase</shortName>
        <shortName evidence="1">AdSS</shortName>
        <ecNumber evidence="1">6.3.4.4</ecNumber>
    </recommendedName>
    <alternativeName>
        <fullName evidence="1">IMP--aspartate ligase</fullName>
    </alternativeName>
</protein>
<organism>
    <name type="scientific">Bradyrhizobium sp. (strain BTAi1 / ATCC BAA-1182)</name>
    <dbReference type="NCBI Taxonomy" id="288000"/>
    <lineage>
        <taxon>Bacteria</taxon>
        <taxon>Pseudomonadati</taxon>
        <taxon>Pseudomonadota</taxon>
        <taxon>Alphaproteobacteria</taxon>
        <taxon>Hyphomicrobiales</taxon>
        <taxon>Nitrobacteraceae</taxon>
        <taxon>Bradyrhizobium</taxon>
    </lineage>
</organism>
<gene>
    <name evidence="1" type="primary">purA</name>
    <name type="ordered locus">BBta_1850</name>
</gene>
<evidence type="ECO:0000255" key="1">
    <source>
        <dbReference type="HAMAP-Rule" id="MF_00011"/>
    </source>
</evidence>
<evidence type="ECO:0000256" key="2">
    <source>
        <dbReference type="SAM" id="MobiDB-lite"/>
    </source>
</evidence>
<sequence>MANVVVVGAQWGDEGKGKIVDWLSEQADIVVRFQGGHNAGHTLVINGATYKLALLPSGVLRTGKLSVIGNGVVFDPQAFLDEVSKLQSQGVAISPDNLRVAENVTLILPLHRELDALRESASAATAIGTTRRGIGPAYEDKVGRRAIRLMDLADLDTLPHKIDRLLAHHNALRRGLGLEQIDGKDILRELTAFAPKLLPYAETVWRLLDIKRREGKRMLFEGAQGALLDVDHGTYPYVTSSNTVAAQAATGAGLGPGAIGYVLGLCKAYTTRVGQGPFPTEQDNETGRKIGERGREFGTNTGRPRRCGWFDAVLVRQAVRTCGINGLALTKLDILDGFDTIDVCTGYRLDGKEIDHFPAGEGAQARVEPIYETIEGWKQPTANARSWADLPAQAIKYVRRIEELVGCPIALLSTSPEREDTILVQNPFEA</sequence>
<reference key="1">
    <citation type="journal article" date="2007" name="Science">
        <title>Legumes symbioses: absence of nod genes in photosynthetic bradyrhizobia.</title>
        <authorList>
            <person name="Giraud E."/>
            <person name="Moulin L."/>
            <person name="Vallenet D."/>
            <person name="Barbe V."/>
            <person name="Cytryn E."/>
            <person name="Avarre J.-C."/>
            <person name="Jaubert M."/>
            <person name="Simon D."/>
            <person name="Cartieaux F."/>
            <person name="Prin Y."/>
            <person name="Bena G."/>
            <person name="Hannibal L."/>
            <person name="Fardoux J."/>
            <person name="Kojadinovic M."/>
            <person name="Vuillet L."/>
            <person name="Lajus A."/>
            <person name="Cruveiller S."/>
            <person name="Rouy Z."/>
            <person name="Mangenot S."/>
            <person name="Segurens B."/>
            <person name="Dossat C."/>
            <person name="Franck W.L."/>
            <person name="Chang W.-S."/>
            <person name="Saunders E."/>
            <person name="Bruce D."/>
            <person name="Richardson P."/>
            <person name="Normand P."/>
            <person name="Dreyfus B."/>
            <person name="Pignol D."/>
            <person name="Stacey G."/>
            <person name="Emerich D."/>
            <person name="Vermeglio A."/>
            <person name="Medigue C."/>
            <person name="Sadowsky M."/>
        </authorList>
    </citation>
    <scope>NUCLEOTIDE SEQUENCE [LARGE SCALE GENOMIC DNA]</scope>
    <source>
        <strain>BTAi1 / ATCC BAA-1182</strain>
    </source>
</reference>
<comment type="function">
    <text evidence="1">Plays an important role in the de novo pathway of purine nucleotide biosynthesis. Catalyzes the first committed step in the biosynthesis of AMP from IMP.</text>
</comment>
<comment type="catalytic activity">
    <reaction evidence="1">
        <text>IMP + L-aspartate + GTP = N(6)-(1,2-dicarboxyethyl)-AMP + GDP + phosphate + 2 H(+)</text>
        <dbReference type="Rhea" id="RHEA:15753"/>
        <dbReference type="ChEBI" id="CHEBI:15378"/>
        <dbReference type="ChEBI" id="CHEBI:29991"/>
        <dbReference type="ChEBI" id="CHEBI:37565"/>
        <dbReference type="ChEBI" id="CHEBI:43474"/>
        <dbReference type="ChEBI" id="CHEBI:57567"/>
        <dbReference type="ChEBI" id="CHEBI:58053"/>
        <dbReference type="ChEBI" id="CHEBI:58189"/>
        <dbReference type="EC" id="6.3.4.4"/>
    </reaction>
</comment>
<comment type="cofactor">
    <cofactor evidence="1">
        <name>Mg(2+)</name>
        <dbReference type="ChEBI" id="CHEBI:18420"/>
    </cofactor>
    <text evidence="1">Binds 1 Mg(2+) ion per subunit.</text>
</comment>
<comment type="pathway">
    <text evidence="1">Purine metabolism; AMP biosynthesis via de novo pathway; AMP from IMP: step 1/2.</text>
</comment>
<comment type="subunit">
    <text evidence="1">Homodimer.</text>
</comment>
<comment type="subcellular location">
    <subcellularLocation>
        <location evidence="1">Cytoplasm</location>
    </subcellularLocation>
</comment>
<comment type="similarity">
    <text evidence="1">Belongs to the adenylosuccinate synthetase family.</text>
</comment>
<name>PURA_BRASB</name>